<reference key="1">
    <citation type="journal article" date="1995" name="Science">
        <title>Whole-genome random sequencing and assembly of Haemophilus influenzae Rd.</title>
        <authorList>
            <person name="Fleischmann R.D."/>
            <person name="Adams M.D."/>
            <person name="White O."/>
            <person name="Clayton R.A."/>
            <person name="Kirkness E.F."/>
            <person name="Kerlavage A.R."/>
            <person name="Bult C.J."/>
            <person name="Tomb J.-F."/>
            <person name="Dougherty B.A."/>
            <person name="Merrick J.M."/>
            <person name="McKenney K."/>
            <person name="Sutton G.G."/>
            <person name="FitzHugh W."/>
            <person name="Fields C.A."/>
            <person name="Gocayne J.D."/>
            <person name="Scott J.D."/>
            <person name="Shirley R."/>
            <person name="Liu L.-I."/>
            <person name="Glodek A."/>
            <person name="Kelley J.M."/>
            <person name="Weidman J.F."/>
            <person name="Phillips C.A."/>
            <person name="Spriggs T."/>
            <person name="Hedblom E."/>
            <person name="Cotton M.D."/>
            <person name="Utterback T.R."/>
            <person name="Hanna M.C."/>
            <person name="Nguyen D.T."/>
            <person name="Saudek D.M."/>
            <person name="Brandon R.C."/>
            <person name="Fine L.D."/>
            <person name="Fritchman J.L."/>
            <person name="Fuhrmann J.L."/>
            <person name="Geoghagen N.S.M."/>
            <person name="Gnehm C.L."/>
            <person name="McDonald L.A."/>
            <person name="Small K.V."/>
            <person name="Fraser C.M."/>
            <person name="Smith H.O."/>
            <person name="Venter J.C."/>
        </authorList>
    </citation>
    <scope>NUCLEOTIDE SEQUENCE [LARGE SCALE GENOMIC DNA]</scope>
    <source>
        <strain>ATCC 51907 / DSM 11121 / KW20 / Rd</strain>
    </source>
</reference>
<feature type="chain" id="PRO_0000120180" description="Thioredoxin-like protein HI_1115">
    <location>
        <begin position="1"/>
        <end position="167"/>
    </location>
</feature>
<feature type="transmembrane region" description="Helical" evidence="1">
    <location>
        <begin position="10"/>
        <end position="27"/>
    </location>
</feature>
<feature type="domain" description="Thioredoxin" evidence="2">
    <location>
        <begin position="30"/>
        <end position="167"/>
    </location>
</feature>
<feature type="disulfide bond" description="Redox-active" evidence="2">
    <location>
        <begin position="69"/>
        <end position="72"/>
    </location>
</feature>
<gene>
    <name type="ordered locus">HI_1115</name>
</gene>
<comment type="subcellular location">
    <subcellularLocation>
        <location evidence="3">Cell membrane</location>
        <topology evidence="3">Single-pass membrane protein</topology>
    </subcellularLocation>
</comment>
<comment type="similarity">
    <text evidence="3">Belongs to the thioredoxin family.</text>
</comment>
<proteinExistence type="inferred from homology"/>
<organism>
    <name type="scientific">Haemophilus influenzae (strain ATCC 51907 / DSM 11121 / KW20 / Rd)</name>
    <dbReference type="NCBI Taxonomy" id="71421"/>
    <lineage>
        <taxon>Bacteria</taxon>
        <taxon>Pseudomonadati</taxon>
        <taxon>Pseudomonadota</taxon>
        <taxon>Gammaproteobacteria</taxon>
        <taxon>Pasteurellales</taxon>
        <taxon>Pasteurellaceae</taxon>
        <taxon>Haemophilus</taxon>
    </lineage>
</organism>
<sequence>MKIKKLLKNGLSLFLTFIVITSILDFVRRPVVPEEINKITLQDLQGNTFSLESLDQNKPTLLYFWGTWCGYCRYTSPAINSLAKEGYQVVSVALRSGNEADVNDYLSKNDYHFTTVNDPKGEFAERWQINVTPTIVLLSKGKMDLVTTGLTSYWGLKVRLFFAEFFG</sequence>
<evidence type="ECO:0000255" key="1"/>
<evidence type="ECO:0000255" key="2">
    <source>
        <dbReference type="PROSITE-ProRule" id="PRU00691"/>
    </source>
</evidence>
<evidence type="ECO:0000305" key="3"/>
<dbReference type="EMBL" id="L42023">
    <property type="protein sequence ID" value="AAC22769.1"/>
    <property type="molecule type" value="Genomic_DNA"/>
</dbReference>
<dbReference type="PIR" id="G64183">
    <property type="entry name" value="G64183"/>
</dbReference>
<dbReference type="RefSeq" id="NP_439272.1">
    <property type="nucleotide sequence ID" value="NC_000907.1"/>
</dbReference>
<dbReference type="SMR" id="P43787"/>
<dbReference type="STRING" id="71421.HI_1115"/>
<dbReference type="EnsemblBacteria" id="AAC22769">
    <property type="protein sequence ID" value="AAC22769"/>
    <property type="gene ID" value="HI_1115"/>
</dbReference>
<dbReference type="KEGG" id="hin:HI_1115"/>
<dbReference type="PATRIC" id="fig|71421.8.peg.1164"/>
<dbReference type="eggNOG" id="COG0526">
    <property type="taxonomic scope" value="Bacteria"/>
</dbReference>
<dbReference type="HOGENOM" id="CLU_042529_10_1_6"/>
<dbReference type="OrthoDB" id="9796554at2"/>
<dbReference type="PhylomeDB" id="P43787"/>
<dbReference type="BioCyc" id="HINF71421:G1GJ1-1150-MONOMER"/>
<dbReference type="Proteomes" id="UP000000579">
    <property type="component" value="Chromosome"/>
</dbReference>
<dbReference type="GO" id="GO:0005886">
    <property type="term" value="C:plasma membrane"/>
    <property type="evidence" value="ECO:0007669"/>
    <property type="project" value="UniProtKB-SubCell"/>
</dbReference>
<dbReference type="GO" id="GO:0016209">
    <property type="term" value="F:antioxidant activity"/>
    <property type="evidence" value="ECO:0007669"/>
    <property type="project" value="InterPro"/>
</dbReference>
<dbReference type="GO" id="GO:0015036">
    <property type="term" value="F:disulfide oxidoreductase activity"/>
    <property type="evidence" value="ECO:0007669"/>
    <property type="project" value="UniProtKB-ARBA"/>
</dbReference>
<dbReference type="CDD" id="cd03011">
    <property type="entry name" value="TlpA_like_ScsD_MtbDsbE"/>
    <property type="match status" value="1"/>
</dbReference>
<dbReference type="Gene3D" id="3.40.30.10">
    <property type="entry name" value="Glutaredoxin"/>
    <property type="match status" value="1"/>
</dbReference>
<dbReference type="InterPro" id="IPR000866">
    <property type="entry name" value="AhpC/TSA"/>
</dbReference>
<dbReference type="InterPro" id="IPR036249">
    <property type="entry name" value="Thioredoxin-like_sf"/>
</dbReference>
<dbReference type="InterPro" id="IPR017937">
    <property type="entry name" value="Thioredoxin_CS"/>
</dbReference>
<dbReference type="InterPro" id="IPR013766">
    <property type="entry name" value="Thioredoxin_domain"/>
</dbReference>
<dbReference type="InterPro" id="IPR050553">
    <property type="entry name" value="Thioredoxin_ResA/DsbE_sf"/>
</dbReference>
<dbReference type="PANTHER" id="PTHR42852">
    <property type="entry name" value="THIOL:DISULFIDE INTERCHANGE PROTEIN DSBE"/>
    <property type="match status" value="1"/>
</dbReference>
<dbReference type="PANTHER" id="PTHR42852:SF17">
    <property type="entry name" value="THIOREDOXIN-LIKE PROTEIN HI_1115"/>
    <property type="match status" value="1"/>
</dbReference>
<dbReference type="Pfam" id="PF00578">
    <property type="entry name" value="AhpC-TSA"/>
    <property type="match status" value="1"/>
</dbReference>
<dbReference type="SUPFAM" id="SSF52833">
    <property type="entry name" value="Thioredoxin-like"/>
    <property type="match status" value="1"/>
</dbReference>
<dbReference type="PROSITE" id="PS00194">
    <property type="entry name" value="THIOREDOXIN_1"/>
    <property type="match status" value="1"/>
</dbReference>
<dbReference type="PROSITE" id="PS51352">
    <property type="entry name" value="THIOREDOXIN_2"/>
    <property type="match status" value="1"/>
</dbReference>
<accession>P43787</accession>
<name>THIX_HAEIN</name>
<keyword id="KW-1003">Cell membrane</keyword>
<keyword id="KW-1015">Disulfide bond</keyword>
<keyword id="KW-0472">Membrane</keyword>
<keyword id="KW-0676">Redox-active center</keyword>
<keyword id="KW-1185">Reference proteome</keyword>
<keyword id="KW-0812">Transmembrane</keyword>
<keyword id="KW-1133">Transmembrane helix</keyword>
<protein>
    <recommendedName>
        <fullName>Thioredoxin-like protein HI_1115</fullName>
    </recommendedName>
</protein>